<feature type="chain" id="PRO_0000068532" description="Uncharacterized 27.6 kDa protein">
    <location>
        <begin position="1"/>
        <end position="239"/>
    </location>
</feature>
<feature type="sequence conflict" description="In Ref. 2." evidence="1" ref="2">
    <original>SVSED</original>
    <variation>FSKRR</variation>
    <location>
        <begin position="44"/>
        <end position="48"/>
    </location>
</feature>
<reference key="1">
    <citation type="journal article" date="1990" name="Gene">
        <title>Mutations within the replicon of the IncN plasmid pCU1 that affect its Escherichia coli polA-independence but not its autonomous replication ability.</title>
        <authorList>
            <person name="Krishnan B.R."/>
            <person name="Fobert P.R."/>
            <person name="Seitzer U."/>
            <person name="Iyer V.N."/>
        </authorList>
    </citation>
    <scope>NUCLEOTIDE SEQUENCE [GENOMIC DNA]</scope>
    <source>
        <plasmid>IncN pCU1</plasmid>
    </source>
</reference>
<reference key="2">
    <citation type="journal article" date="1993" name="Mol. Gen. Genet.">
        <title>pR plasmid replication provides evidence that single-stranded DNA induces the SOS system in vivo.</title>
        <authorList>
            <person name="Gigliani F."/>
            <person name="Ciotta C."/>
            <person name="Del Grosso M.F."/>
            <person name="Battaglia P.A."/>
        </authorList>
    </citation>
    <scope>NUCLEOTIDE SEQUENCE [GENOMIC DNA]</scope>
    <source>
        <plasmid>pR</plasmid>
    </source>
</reference>
<reference key="3">
    <citation type="journal article" date="1987" name="Gene">
        <title>Isolation and structure of the replicon of the promiscuous plasmid pCU1.</title>
        <authorList>
            <person name="Kozlowski M."/>
            <person name="Thatte V."/>
            <person name="Lau P.C.K."/>
            <person name="Visentin L.P."/>
            <person name="Iyer V.N."/>
        </authorList>
    </citation>
    <scope>NUCLEOTIDE SEQUENCE [GENOMIC DNA] OF 1-48</scope>
    <source>
        <plasmid>IncN pCU1</plasmid>
    </source>
</reference>
<proteinExistence type="inferred from homology"/>
<accession>P18351</accession>
<accession>P97141</accession>
<accession>P97142</accession>
<keyword id="KW-0614">Plasmid</keyword>
<name>YPC1_ECOLX</name>
<geneLocation type="plasmid">
    <name>IncN pCU1</name>
</geneLocation>
<geneLocation type="plasmid">
    <name>pR</name>
</geneLocation>
<comment type="function">
    <text>Mutations in ORF 239 affects the incN plasmid pUC1 E.coli polA-independence but not its autonomous replication ability.</text>
</comment>
<comment type="similarity">
    <text evidence="1">Belongs to the initiator RepB protein family.</text>
</comment>
<comment type="sequence caution" evidence="1">
    <conflict type="erroneous initiation">
        <sequence resource="EMBL-CDS" id="AAA98069"/>
    </conflict>
</comment>
<comment type="sequence caution" evidence="1">
    <conflict type="erroneous initiation">
        <sequence resource="EMBL-CDS" id="AAA98070"/>
    </conflict>
</comment>
<dbReference type="EMBL" id="M18262">
    <property type="protein sequence ID" value="AAA98068.1"/>
    <property type="molecule type" value="Genomic_DNA"/>
</dbReference>
<dbReference type="EMBL" id="M18262">
    <property type="protein sequence ID" value="AAA98069.1"/>
    <property type="status" value="ALT_INIT"/>
    <property type="molecule type" value="Genomic_DNA"/>
</dbReference>
<dbReference type="EMBL" id="M18262">
    <property type="protein sequence ID" value="AAA98070.1"/>
    <property type="status" value="ALT_INIT"/>
    <property type="molecule type" value="Genomic_DNA"/>
</dbReference>
<dbReference type="EMBL" id="S61747">
    <property type="protein sequence ID" value="AAP13930.1"/>
    <property type="molecule type" value="Genomic_DNA"/>
</dbReference>
<dbReference type="PIR" id="JQ0682">
    <property type="entry name" value="QQEC27"/>
</dbReference>
<dbReference type="RefSeq" id="WP_000359513.1">
    <property type="nucleotide sequence ID" value="NZ_WSWX01000100.1"/>
</dbReference>
<dbReference type="RefSeq" id="YP_001096385.1">
    <property type="nucleotide sequence ID" value="NC_009132.1"/>
</dbReference>
<dbReference type="RefSeq" id="YP_006954520.1">
    <property type="nucleotide sequence ID" value="NC_019098.1"/>
</dbReference>
<dbReference type="RefSeq" id="YP_009061013.1">
    <property type="nucleotide sequence ID" value="NC_024974.1"/>
</dbReference>
<dbReference type="RefSeq" id="YP_009068563.1">
    <property type="nucleotide sequence ID" value="NC_025141.1"/>
</dbReference>
<dbReference type="SMR" id="P18351"/>
<dbReference type="GeneID" id="76525245"/>
<dbReference type="GO" id="GO:0003887">
    <property type="term" value="F:DNA-directed DNA polymerase activity"/>
    <property type="evidence" value="ECO:0007669"/>
    <property type="project" value="InterPro"/>
</dbReference>
<dbReference type="GO" id="GO:0006270">
    <property type="term" value="P:DNA replication initiation"/>
    <property type="evidence" value="ECO:0007669"/>
    <property type="project" value="InterPro"/>
</dbReference>
<dbReference type="Gene3D" id="1.10.10.10">
    <property type="entry name" value="Winged helix-like DNA-binding domain superfamily/Winged helix DNA-binding domain"/>
    <property type="match status" value="2"/>
</dbReference>
<dbReference type="InterPro" id="IPR000525">
    <property type="entry name" value="Initiator_Rep_WH1"/>
</dbReference>
<dbReference type="InterPro" id="IPR036388">
    <property type="entry name" value="WH-like_DNA-bd_sf"/>
</dbReference>
<dbReference type="InterPro" id="IPR036390">
    <property type="entry name" value="WH_DNA-bd_sf"/>
</dbReference>
<dbReference type="Pfam" id="PF21205">
    <property type="entry name" value="Rep3_C"/>
    <property type="match status" value="1"/>
</dbReference>
<dbReference type="Pfam" id="PF01051">
    <property type="entry name" value="Rep3_N"/>
    <property type="match status" value="1"/>
</dbReference>
<dbReference type="SUPFAM" id="SSF46785">
    <property type="entry name" value="Winged helix' DNA-binding domain"/>
    <property type="match status" value="2"/>
</dbReference>
<sequence>MDKLLNKKIKVKQSNELTEAAYYLSLKAKRVLWLCLMQTYFTASVSEDDDEMAVLGDSTFKVKVADYQQIFQVSRNQAIKDVKEGVFELSRSAVIFYPKEGSFDCVARPWLTEAGSRSARGIWEIEFNHKLLRYIYGLTNQFTTYSLRDCGSLRNPRTIRLYESLAQFKSSGLWVTTHAWLNDRFLLPESQQKNLAELKRSFLDPALKQINEKTPLLAKYSIDDSGKFLFSIIDKQNPV</sequence>
<organism>
    <name type="scientific">Escherichia coli</name>
    <dbReference type="NCBI Taxonomy" id="562"/>
    <lineage>
        <taxon>Bacteria</taxon>
        <taxon>Pseudomonadati</taxon>
        <taxon>Pseudomonadota</taxon>
        <taxon>Gammaproteobacteria</taxon>
        <taxon>Enterobacterales</taxon>
        <taxon>Enterobacteriaceae</taxon>
        <taxon>Escherichia</taxon>
    </lineage>
</organism>
<evidence type="ECO:0000305" key="1"/>
<protein>
    <recommendedName>
        <fullName>Uncharacterized 27.6 kDa protein</fullName>
    </recommendedName>
    <alternativeName>
        <fullName>ORF 239</fullName>
    </alternativeName>
</protein>